<evidence type="ECO:0000255" key="1">
    <source>
        <dbReference type="HAMAP-Rule" id="MF_04072"/>
    </source>
</evidence>
<evidence type="ECO:0000305" key="2"/>
<organismHost>
    <name type="scientific">Aves</name>
    <dbReference type="NCBI Taxonomy" id="8782"/>
</organismHost>
<organismHost>
    <name type="scientific">Sus scrofa</name>
    <name type="common">Pig</name>
    <dbReference type="NCBI Taxonomy" id="9823"/>
</organismHost>
<organism>
    <name type="scientific">Influenza A virus (strain A/Ruddy Turnstone/New Jersey/47/1985 H4N6)</name>
    <dbReference type="NCBI Taxonomy" id="380343"/>
    <lineage>
        <taxon>Viruses</taxon>
        <taxon>Riboviria</taxon>
        <taxon>Orthornavirae</taxon>
        <taxon>Negarnaviricota</taxon>
        <taxon>Polyploviricotina</taxon>
        <taxon>Insthoviricetes</taxon>
        <taxon>Articulavirales</taxon>
        <taxon>Orthomyxoviridae</taxon>
        <taxon>Alphainfluenzavirus</taxon>
        <taxon>Alphainfluenzavirus influenzae</taxon>
        <taxon>Influenza A virus</taxon>
    </lineage>
</organism>
<reference key="1">
    <citation type="journal article" date="1989" name="Virology">
        <title>Distinct lineages of influenza virus H4 hemagglutinin genes in different regions of the world.</title>
        <authorList>
            <person name="Donis R.O."/>
            <person name="Bean W.J."/>
            <person name="Kawaoka Y."/>
            <person name="Webster R.G."/>
        </authorList>
    </citation>
    <scope>NUCLEOTIDE SEQUENCE</scope>
</reference>
<proteinExistence type="inferred from homology"/>
<keyword id="KW-1167">Clathrin- and caveolin-independent endocytosis of virus by host</keyword>
<keyword id="KW-1165">Clathrin-mediated endocytosis of virus by host</keyword>
<keyword id="KW-1015">Disulfide bond</keyword>
<keyword id="KW-1170">Fusion of virus membrane with host endosomal membrane</keyword>
<keyword id="KW-1168">Fusion of virus membrane with host membrane</keyword>
<keyword id="KW-0325">Glycoprotein</keyword>
<keyword id="KW-0348">Hemagglutinin</keyword>
<keyword id="KW-1032">Host cell membrane</keyword>
<keyword id="KW-1043">Host membrane</keyword>
<keyword id="KW-0945">Host-virus interaction</keyword>
<keyword id="KW-0449">Lipoprotein</keyword>
<keyword id="KW-0472">Membrane</keyword>
<keyword id="KW-0564">Palmitate</keyword>
<keyword id="KW-0732">Signal</keyword>
<keyword id="KW-0812">Transmembrane</keyword>
<keyword id="KW-1133">Transmembrane helix</keyword>
<keyword id="KW-1161">Viral attachment to host cell</keyword>
<keyword id="KW-0261">Viral envelope protein</keyword>
<keyword id="KW-1162">Viral penetration into host cytoplasm</keyword>
<keyword id="KW-0946">Virion</keyword>
<keyword id="KW-1164">Virus endocytosis by host</keyword>
<keyword id="KW-1160">Virus entry into host cell</keyword>
<sequence length="564" mass="63272">MLSITILFLLIAEVSSQNYTGNPVICLGHHAVSNGTMVKTLTDDQVEVVTAQELVESQHLPELCPSPLRLVDGQTCDIVNGALGSPGCDHLNGAEWDVFIERPTAVDTCYPFDVPDYQSIRSILANNGKFEFIAEEFQWNTVKQNGKSGACKRANVNDFFRRLNWLTKSDGNAYPLQNLTKVNNGDYARLYIWGVHHPSTDTEQTNLYKNNPGRVTVSTKTSQTSVVPNIGSRPLVRGQSGRISFYWTIVEPGDLIVFNTIGNLIAPRGHYKLNSQKKSTILNTAVPIGSCVSKCHTNRGSITTTKPFQNISRISIGDCPKYVKQGSLKLATGMRNIPEKATRGLFGAIAGFIENGWQGLIDGWYGFRHQNAEGTGTAADLKSTQAAIDQINGKLNRLIEKTNEKYHQIEKEFEQVEGRIQDLEKYVEDTKIDLWSYNAELLVALENQHTIDVTDSEMNKLFERVRRQLRENAEDKGNGCFEIFHQCDNNCIESIRNGTYDHDIYRDEAINNRFQIQGVKLTQGYKDIILWISFSISCFLLVALLLAFILWACQNGNIRCQICI</sequence>
<accession>P19700</accession>
<dbReference type="SMR" id="P19700"/>
<dbReference type="GlyCosmos" id="P19700">
    <property type="glycosylation" value="5 sites, No reported glycans"/>
</dbReference>
<dbReference type="GO" id="GO:0020002">
    <property type="term" value="C:host cell plasma membrane"/>
    <property type="evidence" value="ECO:0007669"/>
    <property type="project" value="UniProtKB-SubCell"/>
</dbReference>
<dbReference type="GO" id="GO:0016020">
    <property type="term" value="C:membrane"/>
    <property type="evidence" value="ECO:0007669"/>
    <property type="project" value="UniProtKB-UniRule"/>
</dbReference>
<dbReference type="GO" id="GO:0019031">
    <property type="term" value="C:viral envelope"/>
    <property type="evidence" value="ECO:0007669"/>
    <property type="project" value="UniProtKB-UniRule"/>
</dbReference>
<dbReference type="GO" id="GO:0055036">
    <property type="term" value="C:virion membrane"/>
    <property type="evidence" value="ECO:0007669"/>
    <property type="project" value="UniProtKB-SubCell"/>
</dbReference>
<dbReference type="GO" id="GO:0046789">
    <property type="term" value="F:host cell surface receptor binding"/>
    <property type="evidence" value="ECO:0007669"/>
    <property type="project" value="UniProtKB-UniRule"/>
</dbReference>
<dbReference type="GO" id="GO:0075512">
    <property type="term" value="P:clathrin-dependent endocytosis of virus by host cell"/>
    <property type="evidence" value="ECO:0007669"/>
    <property type="project" value="UniProtKB-UniRule"/>
</dbReference>
<dbReference type="GO" id="GO:0039654">
    <property type="term" value="P:fusion of virus membrane with host endosome membrane"/>
    <property type="evidence" value="ECO:0007669"/>
    <property type="project" value="UniProtKB-UniRule"/>
</dbReference>
<dbReference type="GO" id="GO:0019064">
    <property type="term" value="P:fusion of virus membrane with host plasma membrane"/>
    <property type="evidence" value="ECO:0007669"/>
    <property type="project" value="InterPro"/>
</dbReference>
<dbReference type="GO" id="GO:0046761">
    <property type="term" value="P:viral budding from plasma membrane"/>
    <property type="evidence" value="ECO:0007669"/>
    <property type="project" value="UniProtKB-UniRule"/>
</dbReference>
<dbReference type="GO" id="GO:0019062">
    <property type="term" value="P:virion attachment to host cell"/>
    <property type="evidence" value="ECO:0007669"/>
    <property type="project" value="UniProtKB-KW"/>
</dbReference>
<dbReference type="Gene3D" id="3.90.20.10">
    <property type="match status" value="1"/>
</dbReference>
<dbReference type="Gene3D" id="3.90.209.20">
    <property type="match status" value="1"/>
</dbReference>
<dbReference type="HAMAP" id="MF_04072">
    <property type="entry name" value="INFV_HEMA"/>
    <property type="match status" value="1"/>
</dbReference>
<dbReference type="InterPro" id="IPR008980">
    <property type="entry name" value="Capsid_hemagglutn"/>
</dbReference>
<dbReference type="InterPro" id="IPR013828">
    <property type="entry name" value="Hemagglutn_HA1_a/b_dom_sf"/>
</dbReference>
<dbReference type="InterPro" id="IPR000149">
    <property type="entry name" value="Hemagglutn_influenz_A"/>
</dbReference>
<dbReference type="InterPro" id="IPR001364">
    <property type="entry name" value="Hemagglutn_influenz_A/B"/>
</dbReference>
<dbReference type="Pfam" id="PF00509">
    <property type="entry name" value="Hemagglutinin"/>
    <property type="match status" value="1"/>
</dbReference>
<dbReference type="PRINTS" id="PR00330">
    <property type="entry name" value="HEMAGGLUTN1"/>
</dbReference>
<dbReference type="PRINTS" id="PR00329">
    <property type="entry name" value="HEMAGGLUTN12"/>
</dbReference>
<dbReference type="SUPFAM" id="SSF58064">
    <property type="entry name" value="Influenza hemagglutinin (stalk)"/>
    <property type="match status" value="1"/>
</dbReference>
<dbReference type="SUPFAM" id="SSF49818">
    <property type="entry name" value="Viral protein domain"/>
    <property type="match status" value="1"/>
</dbReference>
<name>HEMA_I85A7</name>
<comment type="function">
    <text>Binds to sialic acid-containing receptors on the cell surface, bringing about the attachment of the virus particle to the cell. This attachment induces virion internalization of about two third of the virus particles through clathrin-dependent endocytosis and about one third through a clathrin- and caveolin-independent pathway. Plays a major role in the determination of host range restriction and virulence. Class I viral fusion protein. Responsible for penetration of the virus into the cell cytoplasm by mediating the fusion of the membrane of the endocytosed virus particle with the endosomal membrane. Low pH in endosomes induces an irreversible conformational change in HA2, releasing the fusion hydrophobic peptide. Several trimers are required to form a competent fusion pore.</text>
</comment>
<comment type="function">
    <text evidence="1">Binds to sialic acid-containing receptors on the cell surface, bringing about the attachment of the virus particle to the cell. This attachment induces virion internalization either through clathrin-dependent endocytosis or through clathrin- and caveolin-independent pathway. Plays a major role in the determination of host range restriction and virulence. Class I viral fusion protein. Responsible for penetration of the virus into the cell cytoplasm by mediating the fusion of the membrane of the endocytosed virus particle with the endosomal membrane. Low pH in endosomes induces an irreversible conformational change in HA2, releasing the fusion hydrophobic peptide. Several trimers are required to form a competent fusion pore.</text>
</comment>
<comment type="subunit">
    <text evidence="1">Homotrimer of disulfide-linked HA1-HA2.</text>
</comment>
<comment type="subcellular location">
    <subcellularLocation>
        <location evidence="1">Virion membrane</location>
        <topology evidence="1">Single-pass type I membrane protein</topology>
    </subcellularLocation>
    <subcellularLocation>
        <location evidence="1">Host apical cell membrane</location>
        <topology evidence="1">Single-pass type I membrane protein</topology>
    </subcellularLocation>
    <text evidence="1">Targeted to the apical plasma membrane in epithelial polarized cells through a signal present in the transmembrane domain. Associated with glycosphingolipid- and cholesterol-enriched detergent-resistant lipid rafts.</text>
</comment>
<comment type="PTM">
    <text evidence="1">Palmitoylated.</text>
</comment>
<comment type="PTM">
    <text evidence="1">In natural infection, inactive HA is matured into HA1 and HA2 outside the cell by one or more trypsin-like, arginine-specific endoprotease secreted by the bronchial epithelial cells. One identified protease that may be involved in this process is secreted in lungs by club cells.</text>
</comment>
<comment type="miscellaneous">
    <text>Major glycoprotein, comprises over 80% of the envelope proteins present in virus particle.</text>
</comment>
<comment type="miscellaneous">
    <text>The extent of infection into host organism is determined by HA. Influenza viruses bud from the apical surface of polarized epithelial cells (e.g. bronchial epithelial cells) into lumen of lungs and are therefore usually pneumotropic. The reason is that HA is cleaved by tryptase clara which is restricted to lungs. However, HAs of H5 and H7 pantropic avian viruses subtypes can be cleaved by furin and subtilisin-type enzymes, allowing the virus to grow in other organs than lungs.</text>
</comment>
<comment type="miscellaneous">
    <text evidence="2">The influenza A genome consist of 8 RNA segments. Genetic variation of hemagglutinin and/or neuraminidase genes results in the emergence of new influenza strains. The mechanism of variation can be the result of point mutations or the result of genetic reassortment between segments of two different strains.</text>
</comment>
<comment type="similarity">
    <text evidence="1">Belongs to the influenza viruses hemagglutinin family.</text>
</comment>
<protein>
    <recommendedName>
        <fullName evidence="1">Hemagglutinin</fullName>
    </recommendedName>
    <component>
        <recommendedName>
            <fullName evidence="1">Hemagglutinin HA1 chain</fullName>
        </recommendedName>
    </component>
    <component>
        <recommendedName>
            <fullName evidence="1">Hemagglutinin HA2 chain</fullName>
        </recommendedName>
    </component>
</protein>
<gene>
    <name evidence="1" type="primary">HA</name>
</gene>
<feature type="signal peptide" evidence="1">
    <location>
        <begin position="1"/>
        <end position="16"/>
    </location>
</feature>
<feature type="chain" id="PRO_0000440519" description="Hemagglutinin" evidence="1">
    <location>
        <begin position="17"/>
        <end position="564"/>
    </location>
</feature>
<feature type="chain" id="PRO_0000039038" description="Hemagglutinin HA1 chain">
    <location>
        <begin position="17"/>
        <end position="342"/>
    </location>
</feature>
<feature type="chain" id="PRO_0000039039" description="Hemagglutinin HA2 chain" evidence="1">
    <location>
        <begin position="344"/>
        <end position="564"/>
    </location>
</feature>
<feature type="topological domain" description="Extracellular" evidence="1">
    <location>
        <begin position="17"/>
        <end position="527"/>
    </location>
</feature>
<feature type="transmembrane region" description="Helical" evidence="1">
    <location>
        <begin position="528"/>
        <end position="548"/>
    </location>
</feature>
<feature type="topological domain" description="Cytoplasmic" evidence="1">
    <location>
        <begin position="549"/>
        <end position="564"/>
    </location>
</feature>
<feature type="site" description="Cleavage; by host" evidence="1">
    <location>
        <begin position="343"/>
        <end position="344"/>
    </location>
</feature>
<feature type="lipid moiety-binding region" description="S-palmitoyl cysteine; by host" evidence="1">
    <location>
        <position position="553"/>
    </location>
</feature>
<feature type="lipid moiety-binding region" description="S-palmitoyl cysteine; by host" evidence="1">
    <location>
        <position position="560"/>
    </location>
</feature>
<feature type="lipid moiety-binding region" description="S-palmitoyl cysteine; by host" evidence="1">
    <location>
        <position position="563"/>
    </location>
</feature>
<feature type="glycosylation site" description="N-linked (GlcNAc...) asparagine; by host" evidence="1">
    <location>
        <position position="18"/>
    </location>
</feature>
<feature type="glycosylation site" description="N-linked (GlcNAc...) asparagine; by host" evidence="1">
    <location>
        <position position="34"/>
    </location>
</feature>
<feature type="glycosylation site" description="N-linked (GlcNAc...) asparagine; by host" evidence="1">
    <location>
        <position position="178"/>
    </location>
</feature>
<feature type="glycosylation site" description="N-linked (GlcNAc...) asparagine; by host" evidence="1">
    <location>
        <position position="310"/>
    </location>
</feature>
<feature type="glycosylation site" description="N-linked (GlcNAc...) asparagine; by host" evidence="1">
    <location>
        <position position="497"/>
    </location>
</feature>
<feature type="disulfide bond" description="Interchain (between HA1 and HA2 chains)" evidence="1">
    <location>
        <begin position="26"/>
        <end position="480"/>
    </location>
</feature>
<feature type="disulfide bond" evidence="1">
    <location>
        <begin position="64"/>
        <end position="291"/>
    </location>
</feature>
<feature type="disulfide bond" evidence="1">
    <location>
        <begin position="76"/>
        <end position="88"/>
    </location>
</feature>
<feature type="disulfide bond" evidence="1">
    <location>
        <begin position="109"/>
        <end position="151"/>
    </location>
</feature>
<feature type="disulfide bond" evidence="1">
    <location>
        <begin position="295"/>
        <end position="319"/>
    </location>
</feature>
<feature type="disulfide bond" evidence="1">
    <location>
        <begin position="487"/>
        <end position="491"/>
    </location>
</feature>